<proteinExistence type="inferred from homology"/>
<protein>
    <recommendedName>
        <fullName evidence="1">Imidazole glycerol phosphate synthase subunit HisH</fullName>
        <ecNumber evidence="1">4.3.2.10</ecNumber>
    </recommendedName>
    <alternativeName>
        <fullName evidence="1">IGP synthase glutaminase subunit</fullName>
        <ecNumber evidence="1">3.5.1.2</ecNumber>
    </alternativeName>
    <alternativeName>
        <fullName evidence="1">IGP synthase subunit HisH</fullName>
    </alternativeName>
    <alternativeName>
        <fullName evidence="1">ImGP synthase subunit HisH</fullName>
        <shortName evidence="1">IGPS subunit HisH</shortName>
    </alternativeName>
</protein>
<sequence>MTDQKLVTVIDYGMGNLRSVAKAAEHAADSNTRICISDKAEDIRSADAIIFPGQGAAKACMKALNETNITHALIQAATEKPFLGICMGLQVLMTHSQENEGVDCLDILKGDVQKFDLSGHPELKMPHMGWNQIHQTIDHPLWHNIEQNSRFYFVHSYFVSPHDKQIIAGETTHGKRFTSAIAQNNLFAIQAHPEKSADAGLQLFKNFLNWNGQ</sequence>
<gene>
    <name evidence="1" type="primary">hisH</name>
    <name type="ordered locus">Tcr_1967</name>
</gene>
<evidence type="ECO:0000255" key="1">
    <source>
        <dbReference type="HAMAP-Rule" id="MF_00278"/>
    </source>
</evidence>
<accession>Q31E66</accession>
<dbReference type="EC" id="4.3.2.10" evidence="1"/>
<dbReference type="EC" id="3.5.1.2" evidence="1"/>
<dbReference type="EMBL" id="CP000109">
    <property type="protein sequence ID" value="ABB42557.1"/>
    <property type="molecule type" value="Genomic_DNA"/>
</dbReference>
<dbReference type="SMR" id="Q31E66"/>
<dbReference type="STRING" id="317025.Tcr_1967"/>
<dbReference type="KEGG" id="tcx:Tcr_1967"/>
<dbReference type="eggNOG" id="COG0118">
    <property type="taxonomic scope" value="Bacteria"/>
</dbReference>
<dbReference type="HOGENOM" id="CLU_071837_2_0_6"/>
<dbReference type="OrthoDB" id="9807137at2"/>
<dbReference type="UniPathway" id="UPA00031">
    <property type="reaction ID" value="UER00010"/>
</dbReference>
<dbReference type="GO" id="GO:0005737">
    <property type="term" value="C:cytoplasm"/>
    <property type="evidence" value="ECO:0007669"/>
    <property type="project" value="UniProtKB-SubCell"/>
</dbReference>
<dbReference type="GO" id="GO:0004359">
    <property type="term" value="F:glutaminase activity"/>
    <property type="evidence" value="ECO:0007669"/>
    <property type="project" value="UniProtKB-EC"/>
</dbReference>
<dbReference type="GO" id="GO:0000107">
    <property type="term" value="F:imidazoleglycerol-phosphate synthase activity"/>
    <property type="evidence" value="ECO:0007669"/>
    <property type="project" value="UniProtKB-UniRule"/>
</dbReference>
<dbReference type="GO" id="GO:0016829">
    <property type="term" value="F:lyase activity"/>
    <property type="evidence" value="ECO:0007669"/>
    <property type="project" value="UniProtKB-KW"/>
</dbReference>
<dbReference type="GO" id="GO:0000105">
    <property type="term" value="P:L-histidine biosynthetic process"/>
    <property type="evidence" value="ECO:0007669"/>
    <property type="project" value="UniProtKB-UniRule"/>
</dbReference>
<dbReference type="CDD" id="cd01748">
    <property type="entry name" value="GATase1_IGP_Synthase"/>
    <property type="match status" value="1"/>
</dbReference>
<dbReference type="Gene3D" id="3.40.50.880">
    <property type="match status" value="1"/>
</dbReference>
<dbReference type="HAMAP" id="MF_00278">
    <property type="entry name" value="HisH"/>
    <property type="match status" value="1"/>
</dbReference>
<dbReference type="InterPro" id="IPR029062">
    <property type="entry name" value="Class_I_gatase-like"/>
</dbReference>
<dbReference type="InterPro" id="IPR017926">
    <property type="entry name" value="GATASE"/>
</dbReference>
<dbReference type="InterPro" id="IPR010139">
    <property type="entry name" value="Imidazole-glycPsynth_HisH"/>
</dbReference>
<dbReference type="NCBIfam" id="TIGR01855">
    <property type="entry name" value="IMP_synth_hisH"/>
    <property type="match status" value="1"/>
</dbReference>
<dbReference type="PANTHER" id="PTHR42701">
    <property type="entry name" value="IMIDAZOLE GLYCEROL PHOSPHATE SYNTHASE SUBUNIT HISH"/>
    <property type="match status" value="1"/>
</dbReference>
<dbReference type="PANTHER" id="PTHR42701:SF2">
    <property type="entry name" value="IMIDAZOLE GLYCEROL PHOSPHATE SYNTHASE SUBUNIT HISH 1"/>
    <property type="match status" value="1"/>
</dbReference>
<dbReference type="Pfam" id="PF00117">
    <property type="entry name" value="GATase"/>
    <property type="match status" value="1"/>
</dbReference>
<dbReference type="PIRSF" id="PIRSF000495">
    <property type="entry name" value="Amidotransf_hisH"/>
    <property type="match status" value="1"/>
</dbReference>
<dbReference type="SUPFAM" id="SSF52317">
    <property type="entry name" value="Class I glutamine amidotransferase-like"/>
    <property type="match status" value="1"/>
</dbReference>
<dbReference type="PROSITE" id="PS51273">
    <property type="entry name" value="GATASE_TYPE_1"/>
    <property type="match status" value="1"/>
</dbReference>
<feature type="chain" id="PRO_0000231767" description="Imidazole glycerol phosphate synthase subunit HisH">
    <location>
        <begin position="1"/>
        <end position="213"/>
    </location>
</feature>
<feature type="domain" description="Glutamine amidotransferase type-1" evidence="1">
    <location>
        <begin position="6"/>
        <end position="213"/>
    </location>
</feature>
<feature type="active site" description="Nucleophile" evidence="1">
    <location>
        <position position="86"/>
    </location>
</feature>
<feature type="active site" evidence="1">
    <location>
        <position position="192"/>
    </location>
</feature>
<feature type="active site" evidence="1">
    <location>
        <position position="194"/>
    </location>
</feature>
<name>HIS5_HYDCU</name>
<comment type="function">
    <text evidence="1">IGPS catalyzes the conversion of PRFAR and glutamine to IGP, AICAR and glutamate. The HisH subunit catalyzes the hydrolysis of glutamine to glutamate and ammonia as part of the synthesis of IGP and AICAR. The resulting ammonia molecule is channeled to the active site of HisF.</text>
</comment>
<comment type="catalytic activity">
    <reaction evidence="1">
        <text>5-[(5-phospho-1-deoxy-D-ribulos-1-ylimino)methylamino]-1-(5-phospho-beta-D-ribosyl)imidazole-4-carboxamide + L-glutamine = D-erythro-1-(imidazol-4-yl)glycerol 3-phosphate + 5-amino-1-(5-phospho-beta-D-ribosyl)imidazole-4-carboxamide + L-glutamate + H(+)</text>
        <dbReference type="Rhea" id="RHEA:24793"/>
        <dbReference type="ChEBI" id="CHEBI:15378"/>
        <dbReference type="ChEBI" id="CHEBI:29985"/>
        <dbReference type="ChEBI" id="CHEBI:58278"/>
        <dbReference type="ChEBI" id="CHEBI:58359"/>
        <dbReference type="ChEBI" id="CHEBI:58475"/>
        <dbReference type="ChEBI" id="CHEBI:58525"/>
        <dbReference type="EC" id="4.3.2.10"/>
    </reaction>
</comment>
<comment type="catalytic activity">
    <reaction evidence="1">
        <text>L-glutamine + H2O = L-glutamate + NH4(+)</text>
        <dbReference type="Rhea" id="RHEA:15889"/>
        <dbReference type="ChEBI" id="CHEBI:15377"/>
        <dbReference type="ChEBI" id="CHEBI:28938"/>
        <dbReference type="ChEBI" id="CHEBI:29985"/>
        <dbReference type="ChEBI" id="CHEBI:58359"/>
        <dbReference type="EC" id="3.5.1.2"/>
    </reaction>
</comment>
<comment type="pathway">
    <text evidence="1">Amino-acid biosynthesis; L-histidine biosynthesis; L-histidine from 5-phospho-alpha-D-ribose 1-diphosphate: step 5/9.</text>
</comment>
<comment type="subunit">
    <text evidence="1">Heterodimer of HisH and HisF.</text>
</comment>
<comment type="subcellular location">
    <subcellularLocation>
        <location evidence="1">Cytoplasm</location>
    </subcellularLocation>
</comment>
<reference key="1">
    <citation type="journal article" date="2006" name="PLoS Biol.">
        <title>The genome of deep-sea vent chemolithoautotroph Thiomicrospira crunogena XCL-2.</title>
        <authorList>
            <person name="Scott K.M."/>
            <person name="Sievert S.M."/>
            <person name="Abril F.N."/>
            <person name="Ball L.A."/>
            <person name="Barrett C.J."/>
            <person name="Blake R.A."/>
            <person name="Boller A.J."/>
            <person name="Chain P.S.G."/>
            <person name="Clark J.A."/>
            <person name="Davis C.R."/>
            <person name="Detter C."/>
            <person name="Do K.F."/>
            <person name="Dobrinski K.P."/>
            <person name="Faza B.I."/>
            <person name="Fitzpatrick K.A."/>
            <person name="Freyermuth S.K."/>
            <person name="Harmer T.L."/>
            <person name="Hauser L.J."/>
            <person name="Huegler M."/>
            <person name="Kerfeld C.A."/>
            <person name="Klotz M.G."/>
            <person name="Kong W.W."/>
            <person name="Land M."/>
            <person name="Lapidus A."/>
            <person name="Larimer F.W."/>
            <person name="Longo D.L."/>
            <person name="Lucas S."/>
            <person name="Malfatti S.A."/>
            <person name="Massey S.E."/>
            <person name="Martin D.D."/>
            <person name="McCuddin Z."/>
            <person name="Meyer F."/>
            <person name="Moore J.L."/>
            <person name="Ocampo L.H. Jr."/>
            <person name="Paul J.H."/>
            <person name="Paulsen I.T."/>
            <person name="Reep D.K."/>
            <person name="Ren Q."/>
            <person name="Ross R.L."/>
            <person name="Sato P.Y."/>
            <person name="Thomas P."/>
            <person name="Tinkham L.E."/>
            <person name="Zeruth G.T."/>
        </authorList>
    </citation>
    <scope>NUCLEOTIDE SEQUENCE [LARGE SCALE GENOMIC DNA]</scope>
    <source>
        <strain>DSM 25203 / XCL-2</strain>
    </source>
</reference>
<organism>
    <name type="scientific">Hydrogenovibrio crunogenus (strain DSM 25203 / XCL-2)</name>
    <name type="common">Thiomicrospira crunogena</name>
    <dbReference type="NCBI Taxonomy" id="317025"/>
    <lineage>
        <taxon>Bacteria</taxon>
        <taxon>Pseudomonadati</taxon>
        <taxon>Pseudomonadota</taxon>
        <taxon>Gammaproteobacteria</taxon>
        <taxon>Thiotrichales</taxon>
        <taxon>Piscirickettsiaceae</taxon>
        <taxon>Hydrogenovibrio</taxon>
    </lineage>
</organism>
<keyword id="KW-0028">Amino-acid biosynthesis</keyword>
<keyword id="KW-0963">Cytoplasm</keyword>
<keyword id="KW-0315">Glutamine amidotransferase</keyword>
<keyword id="KW-0368">Histidine biosynthesis</keyword>
<keyword id="KW-0378">Hydrolase</keyword>
<keyword id="KW-0456">Lyase</keyword>